<sequence>MTQDELKKAVGWAALDYVRPDTIVGVGTGSTAAHFIDALGSIKHQIKGAVSSSDASTEKLKSLGIPVFDANEVDSLDVYVDGADEINGHMQMIKGGGAALTREKIISALSRQFICIVDASKQVDVLGKFPLPVEVIPMARSYVARELVKLGGQPVYRQGVVTDNGNVILDVHNLNIMDAIAVENHINGIPGVVTVGLFANRGADVALVGTSEGVKTVVK</sequence>
<comment type="function">
    <text evidence="1">Catalyzes the reversible conversion of ribose-5-phosphate to ribulose 5-phosphate.</text>
</comment>
<comment type="catalytic activity">
    <reaction evidence="1">
        <text>aldehydo-D-ribose 5-phosphate = D-ribulose 5-phosphate</text>
        <dbReference type="Rhea" id="RHEA:14657"/>
        <dbReference type="ChEBI" id="CHEBI:58121"/>
        <dbReference type="ChEBI" id="CHEBI:58273"/>
        <dbReference type="EC" id="5.3.1.6"/>
    </reaction>
</comment>
<comment type="pathway">
    <text evidence="1">Carbohydrate degradation; pentose phosphate pathway; D-ribose 5-phosphate from D-ribulose 5-phosphate (non-oxidative stage): step 1/1.</text>
</comment>
<comment type="subunit">
    <text evidence="1">Homodimer.</text>
</comment>
<comment type="similarity">
    <text evidence="1">Belongs to the ribose 5-phosphate isomerase family.</text>
</comment>
<name>RPIA_PECCP</name>
<keyword id="KW-0413">Isomerase</keyword>
<reference key="1">
    <citation type="submission" date="2009-07" db="EMBL/GenBank/DDBJ databases">
        <title>Complete sequence of Pectobacterium carotovorum subsp. carotovorum PC1.</title>
        <authorList>
            <consortium name="US DOE Joint Genome Institute"/>
            <person name="Lucas S."/>
            <person name="Copeland A."/>
            <person name="Lapidus A."/>
            <person name="Glavina del Rio T."/>
            <person name="Tice H."/>
            <person name="Bruce D."/>
            <person name="Goodwin L."/>
            <person name="Pitluck S."/>
            <person name="Munk A.C."/>
            <person name="Brettin T."/>
            <person name="Detter J.C."/>
            <person name="Han C."/>
            <person name="Tapia R."/>
            <person name="Larimer F."/>
            <person name="Land M."/>
            <person name="Hauser L."/>
            <person name="Kyrpides N."/>
            <person name="Mikhailova N."/>
            <person name="Balakrishnan V."/>
            <person name="Glasner J."/>
            <person name="Perna N.T."/>
        </authorList>
    </citation>
    <scope>NUCLEOTIDE SEQUENCE [LARGE SCALE GENOMIC DNA]</scope>
    <source>
        <strain>PC1</strain>
    </source>
</reference>
<organism>
    <name type="scientific">Pectobacterium carotovorum subsp. carotovorum (strain PC1)</name>
    <dbReference type="NCBI Taxonomy" id="561230"/>
    <lineage>
        <taxon>Bacteria</taxon>
        <taxon>Pseudomonadati</taxon>
        <taxon>Pseudomonadota</taxon>
        <taxon>Gammaproteobacteria</taxon>
        <taxon>Enterobacterales</taxon>
        <taxon>Pectobacteriaceae</taxon>
        <taxon>Pectobacterium</taxon>
    </lineage>
</organism>
<accession>C6DF34</accession>
<evidence type="ECO:0000255" key="1">
    <source>
        <dbReference type="HAMAP-Rule" id="MF_00170"/>
    </source>
</evidence>
<protein>
    <recommendedName>
        <fullName evidence="1">Ribose-5-phosphate isomerase A</fullName>
        <ecNumber evidence="1">5.3.1.6</ecNumber>
    </recommendedName>
    <alternativeName>
        <fullName evidence="1">Phosphoriboisomerase A</fullName>
        <shortName evidence="1">PRI</shortName>
    </alternativeName>
</protein>
<feature type="chain" id="PRO_1000203683" description="Ribose-5-phosphate isomerase A">
    <location>
        <begin position="1"/>
        <end position="219"/>
    </location>
</feature>
<feature type="active site" description="Proton acceptor" evidence="1">
    <location>
        <position position="103"/>
    </location>
</feature>
<feature type="binding site" evidence="1">
    <location>
        <begin position="28"/>
        <end position="31"/>
    </location>
    <ligand>
        <name>substrate</name>
    </ligand>
</feature>
<feature type="binding site" evidence="1">
    <location>
        <begin position="81"/>
        <end position="84"/>
    </location>
    <ligand>
        <name>substrate</name>
    </ligand>
</feature>
<feature type="binding site" evidence="1">
    <location>
        <begin position="94"/>
        <end position="97"/>
    </location>
    <ligand>
        <name>substrate</name>
    </ligand>
</feature>
<feature type="binding site" evidence="1">
    <location>
        <position position="121"/>
    </location>
    <ligand>
        <name>substrate</name>
    </ligand>
</feature>
<proteinExistence type="inferred from homology"/>
<gene>
    <name evidence="1" type="primary">rpiA</name>
    <name type="ordered locus">PC1_3683</name>
</gene>
<dbReference type="EC" id="5.3.1.6" evidence="1"/>
<dbReference type="EMBL" id="CP001657">
    <property type="protein sequence ID" value="ACT14698.1"/>
    <property type="molecule type" value="Genomic_DNA"/>
</dbReference>
<dbReference type="RefSeq" id="WP_015841812.1">
    <property type="nucleotide sequence ID" value="NC_012917.1"/>
</dbReference>
<dbReference type="SMR" id="C6DF34"/>
<dbReference type="STRING" id="561230.PC1_3683"/>
<dbReference type="GeneID" id="67792507"/>
<dbReference type="KEGG" id="pct:PC1_3683"/>
<dbReference type="eggNOG" id="COG0120">
    <property type="taxonomic scope" value="Bacteria"/>
</dbReference>
<dbReference type="HOGENOM" id="CLU_056590_1_1_6"/>
<dbReference type="OrthoDB" id="5870696at2"/>
<dbReference type="UniPathway" id="UPA00115">
    <property type="reaction ID" value="UER00412"/>
</dbReference>
<dbReference type="Proteomes" id="UP000002736">
    <property type="component" value="Chromosome"/>
</dbReference>
<dbReference type="GO" id="GO:0005829">
    <property type="term" value="C:cytosol"/>
    <property type="evidence" value="ECO:0007669"/>
    <property type="project" value="TreeGrafter"/>
</dbReference>
<dbReference type="GO" id="GO:0004751">
    <property type="term" value="F:ribose-5-phosphate isomerase activity"/>
    <property type="evidence" value="ECO:0007669"/>
    <property type="project" value="UniProtKB-UniRule"/>
</dbReference>
<dbReference type="GO" id="GO:0006014">
    <property type="term" value="P:D-ribose metabolic process"/>
    <property type="evidence" value="ECO:0007669"/>
    <property type="project" value="TreeGrafter"/>
</dbReference>
<dbReference type="GO" id="GO:0009052">
    <property type="term" value="P:pentose-phosphate shunt, non-oxidative branch"/>
    <property type="evidence" value="ECO:0007669"/>
    <property type="project" value="UniProtKB-UniRule"/>
</dbReference>
<dbReference type="CDD" id="cd01398">
    <property type="entry name" value="RPI_A"/>
    <property type="match status" value="1"/>
</dbReference>
<dbReference type="FunFam" id="3.30.70.260:FF:000004">
    <property type="entry name" value="Ribose-5-phosphate isomerase A"/>
    <property type="match status" value="1"/>
</dbReference>
<dbReference type="FunFam" id="3.40.50.1360:FF:000001">
    <property type="entry name" value="Ribose-5-phosphate isomerase A"/>
    <property type="match status" value="1"/>
</dbReference>
<dbReference type="Gene3D" id="3.30.70.260">
    <property type="match status" value="1"/>
</dbReference>
<dbReference type="Gene3D" id="3.40.50.1360">
    <property type="match status" value="1"/>
</dbReference>
<dbReference type="HAMAP" id="MF_00170">
    <property type="entry name" value="Rib_5P_isom_A"/>
    <property type="match status" value="1"/>
</dbReference>
<dbReference type="InterPro" id="IPR037171">
    <property type="entry name" value="NagB/RpiA_transferase-like"/>
</dbReference>
<dbReference type="InterPro" id="IPR020672">
    <property type="entry name" value="Ribose5P_isomerase_typA_subgr"/>
</dbReference>
<dbReference type="InterPro" id="IPR004788">
    <property type="entry name" value="Ribose5P_isomerase_type_A"/>
</dbReference>
<dbReference type="NCBIfam" id="NF001924">
    <property type="entry name" value="PRK00702.1"/>
    <property type="match status" value="1"/>
</dbReference>
<dbReference type="NCBIfam" id="TIGR00021">
    <property type="entry name" value="rpiA"/>
    <property type="match status" value="1"/>
</dbReference>
<dbReference type="PANTHER" id="PTHR11934">
    <property type="entry name" value="RIBOSE-5-PHOSPHATE ISOMERASE"/>
    <property type="match status" value="1"/>
</dbReference>
<dbReference type="PANTHER" id="PTHR11934:SF0">
    <property type="entry name" value="RIBOSE-5-PHOSPHATE ISOMERASE"/>
    <property type="match status" value="1"/>
</dbReference>
<dbReference type="Pfam" id="PF06026">
    <property type="entry name" value="Rib_5-P_isom_A"/>
    <property type="match status" value="1"/>
</dbReference>
<dbReference type="SUPFAM" id="SSF75445">
    <property type="entry name" value="D-ribose-5-phosphate isomerase (RpiA), lid domain"/>
    <property type="match status" value="1"/>
</dbReference>
<dbReference type="SUPFAM" id="SSF100950">
    <property type="entry name" value="NagB/RpiA/CoA transferase-like"/>
    <property type="match status" value="1"/>
</dbReference>